<organism>
    <name type="scientific">Cucumis sativus</name>
    <name type="common">Cucumber</name>
    <dbReference type="NCBI Taxonomy" id="3659"/>
    <lineage>
        <taxon>Eukaryota</taxon>
        <taxon>Viridiplantae</taxon>
        <taxon>Streptophyta</taxon>
        <taxon>Embryophyta</taxon>
        <taxon>Tracheophyta</taxon>
        <taxon>Spermatophyta</taxon>
        <taxon>Magnoliopsida</taxon>
        <taxon>eudicotyledons</taxon>
        <taxon>Gunneridae</taxon>
        <taxon>Pentapetalae</taxon>
        <taxon>rosids</taxon>
        <taxon>fabids</taxon>
        <taxon>Cucurbitales</taxon>
        <taxon>Cucurbitaceae</taxon>
        <taxon>Benincaseae</taxon>
        <taxon>Cucumis</taxon>
    </lineage>
</organism>
<keyword id="KW-0150">Chloroplast</keyword>
<keyword id="KW-0472">Membrane</keyword>
<keyword id="KW-0602">Photosynthesis</keyword>
<keyword id="KW-0603">Photosystem I</keyword>
<keyword id="KW-0934">Plastid</keyword>
<keyword id="KW-0793">Thylakoid</keyword>
<keyword id="KW-0809">Transit peptide</keyword>
<keyword id="KW-0812">Transmembrane</keyword>
<keyword id="KW-1133">Transmembrane helix</keyword>
<proteinExistence type="evidence at transcript level"/>
<gene>
    <name type="primary">PSAL</name>
</gene>
<comment type="subcellular location">
    <subcellularLocation>
        <location evidence="3">Plastid</location>
        <location evidence="3">Chloroplast thylakoid membrane</location>
        <topology evidence="3">Multi-pass membrane protein</topology>
    </subcellularLocation>
</comment>
<comment type="similarity">
    <text evidence="3">Belongs to the PsaL family.</text>
</comment>
<name>PSAL_CUCSA</name>
<accession>Q39654</accession>
<accession>Q39655</accession>
<feature type="transit peptide" description="Chloroplast" evidence="1">
    <location>
        <begin position="1"/>
        <end position="48"/>
    </location>
</feature>
<feature type="chain" id="PRO_0000029425" description="Photosystem I reaction center subunit XI, chloroplastic">
    <location>
        <begin position="49"/>
        <end position="217"/>
    </location>
</feature>
<feature type="topological domain" description="Stromal" evidence="2">
    <location>
        <begin position="49"/>
        <end position="135"/>
    </location>
</feature>
<feature type="transmembrane region" description="Helical" evidence="2">
    <location>
        <begin position="136"/>
        <end position="156"/>
    </location>
</feature>
<feature type="topological domain" description="Lumenal" evidence="2">
    <location>
        <begin position="157"/>
        <end position="189"/>
    </location>
</feature>
<feature type="transmembrane region" description="Helical" evidence="2">
    <location>
        <begin position="190"/>
        <end position="210"/>
    </location>
</feature>
<feature type="topological domain" description="Stromal" evidence="2">
    <location>
        <begin position="211"/>
        <end position="217"/>
    </location>
</feature>
<feature type="sequence conflict" description="In Ref. 2; BAA11677." evidence="3" ref="2">
    <original>T</original>
    <variation>I</variation>
    <location>
        <position position="8"/>
    </location>
</feature>
<evidence type="ECO:0000250" key="1"/>
<evidence type="ECO:0000255" key="2"/>
<evidence type="ECO:0000305" key="3"/>
<reference key="1">
    <citation type="journal article" date="1995" name="Biosci. Biotechnol. Biochem.">
        <title>Molecular cloning of cDNA for a 17.5-kDa polypeptide, the psaL gene product, associated with cucumber Photosystem I.</title>
        <authorList>
            <person name="Iwasaki Y."/>
            <person name="Komano M."/>
            <person name="Takabe T."/>
        </authorList>
    </citation>
    <scope>NUCLEOTIDE SEQUENCE [MRNA]</scope>
</reference>
<reference key="2">
    <citation type="journal article" date="1996" name="Plant Cell Physiol.">
        <title>The level of mRNA transcribed from psaL, which encodes a subunit of photosystem I, is increased by cytokinin in darkness in etiolated cotyledons of cucumber.</title>
        <authorList>
            <person name="Toyama T."/>
            <person name="Teramoto H."/>
            <person name="Takeba G."/>
        </authorList>
    </citation>
    <scope>NUCLEOTIDE SEQUENCE [MRNA]</scope>
    <source>
        <tissue>Cotyledon</tissue>
    </source>
</reference>
<sequence length="217" mass="22878">MATATSPTASQLSSSFASSNTRALISPKGLSASPLRRIPTRTHSFTIRAIQADKPTFQVIQPINGDPFIGSLETPVTSSPLIAWYLSNLPAYRTAVSPLLRGIEVGLAHGFFLVGPFVKAGPLRNTAYAGGAGSLAAGGLIVILSVCLTMYGVASFNEGEPSTAPSLTLTGRKKTPDPLQTADGWAKFSGGFFFGGISGVIWAYFLLYVLDLPYYVK</sequence>
<protein>
    <recommendedName>
        <fullName>Photosystem I reaction center subunit XI, chloroplastic</fullName>
        <shortName>PSI-L</shortName>
    </recommendedName>
    <alternativeName>
        <fullName>PSI subunit V</fullName>
    </alternativeName>
</protein>
<dbReference type="EMBL" id="D50456">
    <property type="protein sequence ID" value="BAA09047.1"/>
    <property type="molecule type" value="mRNA"/>
</dbReference>
<dbReference type="EMBL" id="D83007">
    <property type="protein sequence ID" value="BAA11677.1"/>
    <property type="molecule type" value="mRNA"/>
</dbReference>
<dbReference type="PIR" id="JC4281">
    <property type="entry name" value="JC4281"/>
</dbReference>
<dbReference type="RefSeq" id="NP_001267647.1">
    <property type="nucleotide sequence ID" value="NM_001280718.1"/>
</dbReference>
<dbReference type="SMR" id="Q39654"/>
<dbReference type="GeneID" id="101208674"/>
<dbReference type="KEGG" id="csv:101208674"/>
<dbReference type="eggNOG" id="ENOG502QVFH">
    <property type="taxonomic scope" value="Eukaryota"/>
</dbReference>
<dbReference type="OrthoDB" id="35506at2759"/>
<dbReference type="GO" id="GO:0009535">
    <property type="term" value="C:chloroplast thylakoid membrane"/>
    <property type="evidence" value="ECO:0007669"/>
    <property type="project" value="UniProtKB-SubCell"/>
</dbReference>
<dbReference type="GO" id="GO:0009538">
    <property type="term" value="C:photosystem I reaction center"/>
    <property type="evidence" value="ECO:0007669"/>
    <property type="project" value="InterPro"/>
</dbReference>
<dbReference type="GO" id="GO:0015979">
    <property type="term" value="P:photosynthesis"/>
    <property type="evidence" value="ECO:0007669"/>
    <property type="project" value="UniProtKB-KW"/>
</dbReference>
<dbReference type="FunFam" id="1.20.1240.10:FF:000001">
    <property type="entry name" value="Photosystem I reaction center subunit XI"/>
    <property type="match status" value="1"/>
</dbReference>
<dbReference type="Gene3D" id="1.20.1240.10">
    <property type="entry name" value="Photosystem I PsaL, reaction centre subunit XI"/>
    <property type="match status" value="1"/>
</dbReference>
<dbReference type="InterPro" id="IPR003757">
    <property type="entry name" value="PSI_PsaL"/>
</dbReference>
<dbReference type="InterPro" id="IPR036592">
    <property type="entry name" value="PSI_PsaL_sf"/>
</dbReference>
<dbReference type="InterPro" id="IPR022980">
    <property type="entry name" value="PSI_suXI"/>
</dbReference>
<dbReference type="PANTHER" id="PTHR34803">
    <property type="entry name" value="PHOTOSYSTEM I REACTION CENTER SUBUNIT XI, CHLOROPLASTIC"/>
    <property type="match status" value="1"/>
</dbReference>
<dbReference type="PANTHER" id="PTHR34803:SF2">
    <property type="entry name" value="PHOTOSYSTEM I REACTION CENTER SUBUNIT XI, CHLOROPLASTIC"/>
    <property type="match status" value="1"/>
</dbReference>
<dbReference type="Pfam" id="PF02605">
    <property type="entry name" value="PsaL"/>
    <property type="match status" value="1"/>
</dbReference>
<dbReference type="SUPFAM" id="SSF81568">
    <property type="entry name" value="Photosystem I reaction center subunit XI, PsaL"/>
    <property type="match status" value="1"/>
</dbReference>